<protein>
    <recommendedName>
        <fullName evidence="1">Peptide chain release factor 3</fullName>
        <shortName evidence="1">RF-3</shortName>
    </recommendedName>
</protein>
<dbReference type="EMBL" id="AM902716">
    <property type="protein sequence ID" value="CAP40420.1"/>
    <property type="molecule type" value="Genomic_DNA"/>
</dbReference>
<dbReference type="SMR" id="A9HW20"/>
<dbReference type="STRING" id="94624.Bpet0089"/>
<dbReference type="KEGG" id="bpt:Bpet0089"/>
<dbReference type="eggNOG" id="COG4108">
    <property type="taxonomic scope" value="Bacteria"/>
</dbReference>
<dbReference type="Proteomes" id="UP000001225">
    <property type="component" value="Chromosome"/>
</dbReference>
<dbReference type="GO" id="GO:0005829">
    <property type="term" value="C:cytosol"/>
    <property type="evidence" value="ECO:0007669"/>
    <property type="project" value="TreeGrafter"/>
</dbReference>
<dbReference type="GO" id="GO:0005525">
    <property type="term" value="F:GTP binding"/>
    <property type="evidence" value="ECO:0007669"/>
    <property type="project" value="UniProtKB-UniRule"/>
</dbReference>
<dbReference type="GO" id="GO:0003924">
    <property type="term" value="F:GTPase activity"/>
    <property type="evidence" value="ECO:0007669"/>
    <property type="project" value="InterPro"/>
</dbReference>
<dbReference type="GO" id="GO:0016150">
    <property type="term" value="F:translation release factor activity, codon nonspecific"/>
    <property type="evidence" value="ECO:0007669"/>
    <property type="project" value="TreeGrafter"/>
</dbReference>
<dbReference type="GO" id="GO:0016149">
    <property type="term" value="F:translation release factor activity, codon specific"/>
    <property type="evidence" value="ECO:0007669"/>
    <property type="project" value="UniProtKB-UniRule"/>
</dbReference>
<dbReference type="GO" id="GO:0006449">
    <property type="term" value="P:regulation of translational termination"/>
    <property type="evidence" value="ECO:0007669"/>
    <property type="project" value="UniProtKB-UniRule"/>
</dbReference>
<dbReference type="CDD" id="cd04169">
    <property type="entry name" value="RF3"/>
    <property type="match status" value="1"/>
</dbReference>
<dbReference type="FunFam" id="3.30.70.3280:FF:000001">
    <property type="entry name" value="Peptide chain release factor 3"/>
    <property type="match status" value="1"/>
</dbReference>
<dbReference type="FunFam" id="3.40.50.300:FF:000542">
    <property type="entry name" value="Peptide chain release factor 3"/>
    <property type="match status" value="1"/>
</dbReference>
<dbReference type="Gene3D" id="3.40.50.300">
    <property type="entry name" value="P-loop containing nucleotide triphosphate hydrolases"/>
    <property type="match status" value="2"/>
</dbReference>
<dbReference type="Gene3D" id="3.30.70.3280">
    <property type="entry name" value="Peptide chain release factor 3, domain III"/>
    <property type="match status" value="1"/>
</dbReference>
<dbReference type="HAMAP" id="MF_00072">
    <property type="entry name" value="Rel_fac_3"/>
    <property type="match status" value="1"/>
</dbReference>
<dbReference type="InterPro" id="IPR053905">
    <property type="entry name" value="EF-G-like_DII"/>
</dbReference>
<dbReference type="InterPro" id="IPR035647">
    <property type="entry name" value="EFG_III/V"/>
</dbReference>
<dbReference type="InterPro" id="IPR031157">
    <property type="entry name" value="G_TR_CS"/>
</dbReference>
<dbReference type="InterPro" id="IPR027417">
    <property type="entry name" value="P-loop_NTPase"/>
</dbReference>
<dbReference type="InterPro" id="IPR004548">
    <property type="entry name" value="PrfC"/>
</dbReference>
<dbReference type="InterPro" id="IPR032090">
    <property type="entry name" value="RF3_C"/>
</dbReference>
<dbReference type="InterPro" id="IPR038467">
    <property type="entry name" value="RF3_dom_3_sf"/>
</dbReference>
<dbReference type="InterPro" id="IPR041732">
    <property type="entry name" value="RF3_GTP-bd"/>
</dbReference>
<dbReference type="InterPro" id="IPR005225">
    <property type="entry name" value="Small_GTP-bd"/>
</dbReference>
<dbReference type="InterPro" id="IPR000795">
    <property type="entry name" value="T_Tr_GTP-bd_dom"/>
</dbReference>
<dbReference type="InterPro" id="IPR009000">
    <property type="entry name" value="Transl_B-barrel_sf"/>
</dbReference>
<dbReference type="NCBIfam" id="TIGR00503">
    <property type="entry name" value="prfC"/>
    <property type="match status" value="1"/>
</dbReference>
<dbReference type="NCBIfam" id="NF001964">
    <property type="entry name" value="PRK00741.1"/>
    <property type="match status" value="1"/>
</dbReference>
<dbReference type="NCBIfam" id="TIGR00231">
    <property type="entry name" value="small_GTP"/>
    <property type="match status" value="1"/>
</dbReference>
<dbReference type="PANTHER" id="PTHR43556">
    <property type="entry name" value="PEPTIDE CHAIN RELEASE FACTOR RF3"/>
    <property type="match status" value="1"/>
</dbReference>
<dbReference type="PANTHER" id="PTHR43556:SF2">
    <property type="entry name" value="PEPTIDE CHAIN RELEASE FACTOR RF3"/>
    <property type="match status" value="1"/>
</dbReference>
<dbReference type="Pfam" id="PF22042">
    <property type="entry name" value="EF-G_D2"/>
    <property type="match status" value="1"/>
</dbReference>
<dbReference type="Pfam" id="PF00009">
    <property type="entry name" value="GTP_EFTU"/>
    <property type="match status" value="1"/>
</dbReference>
<dbReference type="Pfam" id="PF16658">
    <property type="entry name" value="RF3_C"/>
    <property type="match status" value="1"/>
</dbReference>
<dbReference type="PRINTS" id="PR00315">
    <property type="entry name" value="ELONGATNFCT"/>
</dbReference>
<dbReference type="SUPFAM" id="SSF54980">
    <property type="entry name" value="EF-G C-terminal domain-like"/>
    <property type="match status" value="1"/>
</dbReference>
<dbReference type="SUPFAM" id="SSF52540">
    <property type="entry name" value="P-loop containing nucleoside triphosphate hydrolases"/>
    <property type="match status" value="1"/>
</dbReference>
<dbReference type="SUPFAM" id="SSF50447">
    <property type="entry name" value="Translation proteins"/>
    <property type="match status" value="1"/>
</dbReference>
<dbReference type="PROSITE" id="PS00301">
    <property type="entry name" value="G_TR_1"/>
    <property type="match status" value="1"/>
</dbReference>
<dbReference type="PROSITE" id="PS51722">
    <property type="entry name" value="G_TR_2"/>
    <property type="match status" value="1"/>
</dbReference>
<keyword id="KW-0963">Cytoplasm</keyword>
<keyword id="KW-0342">GTP-binding</keyword>
<keyword id="KW-0547">Nucleotide-binding</keyword>
<keyword id="KW-0648">Protein biosynthesis</keyword>
<gene>
    <name evidence="1" type="primary">prfC</name>
    <name type="ordered locus">Bpet0089</name>
</gene>
<organism>
    <name type="scientific">Bordetella petrii (strain ATCC BAA-461 / DSM 12804 / CCUG 43448)</name>
    <dbReference type="NCBI Taxonomy" id="340100"/>
    <lineage>
        <taxon>Bacteria</taxon>
        <taxon>Pseudomonadati</taxon>
        <taxon>Pseudomonadota</taxon>
        <taxon>Betaproteobacteria</taxon>
        <taxon>Burkholderiales</taxon>
        <taxon>Alcaligenaceae</taxon>
        <taxon>Bordetella</taxon>
    </lineage>
</organism>
<sequence length="535" mass="59393">MNISQEVARRRTFAIISHPDAGKTTLTEKLLLFAGAIQIAGSVKARKASRHASSDWMEIEKQRGISVASSVMQMEYRDCVINLLDTPGHQDFSEDTYRVLTAVDAALMVIDAANGVEPQTIRLLQVCRARNTPIITFINKMDREVREPLDLLSEIEGHLGMDAVPFSWPVGMGKSFGGVFDIRRDRMRVFRPGQERRSDDDDIIDGLDNPEIASRFGSAFEQANGEIELIQEAAPAFDREAFLAGRQTPVFFGSAINNFGVQEVLDALVEQAPPPGPRQALERLVEPQEPKFTGVVFKVQANMDPAHRDRVAFVRVSSGRFERGMRLKVARTNKEMRPNNVVSFLSQRRELLDEAYAGDVIGIPNHGVLQLGDVLTEGESLRFTGLPFFAPELFQAVEVKDPLRTKQLRIGLTQLGEEGAIQVFRPEAAGGTLLLGAVGQLQFEVVAHRLKTEYGVEARMLPSRYTMARWITSENPRALRKFMDANAAHIAYDVVDAAAFLIGSPAQLRVAEDLYPDVKFHAMREHGGQVFGSHA</sequence>
<name>RF3_BORPD</name>
<feature type="chain" id="PRO_1000092474" description="Peptide chain release factor 3">
    <location>
        <begin position="1"/>
        <end position="535"/>
    </location>
</feature>
<feature type="domain" description="tr-type G">
    <location>
        <begin position="8"/>
        <end position="276"/>
    </location>
</feature>
<feature type="binding site" evidence="1">
    <location>
        <begin position="17"/>
        <end position="24"/>
    </location>
    <ligand>
        <name>GTP</name>
        <dbReference type="ChEBI" id="CHEBI:37565"/>
    </ligand>
</feature>
<feature type="binding site" evidence="1">
    <location>
        <begin position="85"/>
        <end position="89"/>
    </location>
    <ligand>
        <name>GTP</name>
        <dbReference type="ChEBI" id="CHEBI:37565"/>
    </ligand>
</feature>
<feature type="binding site" evidence="1">
    <location>
        <begin position="139"/>
        <end position="142"/>
    </location>
    <ligand>
        <name>GTP</name>
        <dbReference type="ChEBI" id="CHEBI:37565"/>
    </ligand>
</feature>
<comment type="function">
    <text evidence="1">Increases the formation of ribosomal termination complexes and stimulates activities of RF-1 and RF-2. It binds guanine nucleotides and has strong preference for UGA stop codons. It may interact directly with the ribosome. The stimulation of RF-1 and RF-2 is significantly reduced by GTP and GDP, but not by GMP.</text>
</comment>
<comment type="subcellular location">
    <subcellularLocation>
        <location evidence="1">Cytoplasm</location>
    </subcellularLocation>
</comment>
<comment type="similarity">
    <text evidence="1">Belongs to the TRAFAC class translation factor GTPase superfamily. Classic translation factor GTPase family. PrfC subfamily.</text>
</comment>
<evidence type="ECO:0000255" key="1">
    <source>
        <dbReference type="HAMAP-Rule" id="MF_00072"/>
    </source>
</evidence>
<proteinExistence type="inferred from homology"/>
<reference key="1">
    <citation type="journal article" date="2008" name="BMC Genomics">
        <title>The missing link: Bordetella petrii is endowed with both the metabolic versatility of environmental bacteria and virulence traits of pathogenic Bordetellae.</title>
        <authorList>
            <person name="Gross R."/>
            <person name="Guzman C.A."/>
            <person name="Sebaihia M."/>
            <person name="Martin dos Santos V.A.P."/>
            <person name="Pieper D.H."/>
            <person name="Koebnik R."/>
            <person name="Lechner M."/>
            <person name="Bartels D."/>
            <person name="Buhrmester J."/>
            <person name="Choudhuri J.V."/>
            <person name="Ebensen T."/>
            <person name="Gaigalat L."/>
            <person name="Herrmann S."/>
            <person name="Khachane A.N."/>
            <person name="Larisch C."/>
            <person name="Link S."/>
            <person name="Linke B."/>
            <person name="Meyer F."/>
            <person name="Mormann S."/>
            <person name="Nakunst D."/>
            <person name="Rueckert C."/>
            <person name="Schneiker-Bekel S."/>
            <person name="Schulze K."/>
            <person name="Voerholter F.-J."/>
            <person name="Yevsa T."/>
            <person name="Engle J.T."/>
            <person name="Goldman W.E."/>
            <person name="Puehler A."/>
            <person name="Goebel U.B."/>
            <person name="Goesmann A."/>
            <person name="Bloecker H."/>
            <person name="Kaiser O."/>
            <person name="Martinez-Arias R."/>
        </authorList>
    </citation>
    <scope>NUCLEOTIDE SEQUENCE [LARGE SCALE GENOMIC DNA]</scope>
    <source>
        <strain>ATCC BAA-461 / DSM 12804 / CCUG 43448</strain>
    </source>
</reference>
<accession>A9HW20</accession>